<organism>
    <name type="scientific">Shigella flexneri serotype 5b (strain 8401)</name>
    <dbReference type="NCBI Taxonomy" id="373384"/>
    <lineage>
        <taxon>Bacteria</taxon>
        <taxon>Pseudomonadati</taxon>
        <taxon>Pseudomonadota</taxon>
        <taxon>Gammaproteobacteria</taxon>
        <taxon>Enterobacterales</taxon>
        <taxon>Enterobacteriaceae</taxon>
        <taxon>Shigella</taxon>
    </lineage>
</organism>
<sequence>MLHPRARTMLLLSLPAVAIGIASSLILIVVMKIASVLQNLLWQRLPGTLGIAQDSPLWIIGVLTLTGIAVGLVIRFSQGHAGPDPACEPLIGAPVPPSALPGLIVALILGLAGGVSLGPEHPIMTVNIALAVAIGARLLPRVNRMEWTILASAGTIGALFGTPVAAALIFSQTLNGSSEVPLWDRLFAPLMAAAAGALTTGLFFHPHFSLPIAHYGQMEMTDILSGAIVAAIAIAAGMVAVWCLPRLHAMMNQMKNPVLVLGIGGFILGILGVIGGPVSLFKGLDEMQQMVANQAFSTSDYFLLAVIKLAALVVAAASGFRGGRIFPAVFVGVALGLMLHEHVPAVPAAITVSCAILGIVLVVTRDGWLSLFMAAVVVPNTTLLPLLCIVMLPAWLLLAGKPMMMVNRPKQQPPHDNV</sequence>
<keyword id="KW-1003">Cell membrane</keyword>
<keyword id="KW-0407">Ion channel</keyword>
<keyword id="KW-0406">Ion transport</keyword>
<keyword id="KW-0472">Membrane</keyword>
<keyword id="KW-0812">Transmembrane</keyword>
<keyword id="KW-1133">Transmembrane helix</keyword>
<keyword id="KW-0813">Transport</keyword>
<dbReference type="EMBL" id="CP000266">
    <property type="protein sequence ID" value="ABF04555.1"/>
    <property type="molecule type" value="Genomic_DNA"/>
</dbReference>
<dbReference type="RefSeq" id="WP_000903152.1">
    <property type="nucleotide sequence ID" value="NC_008258.1"/>
</dbReference>
<dbReference type="SMR" id="Q0T2B0"/>
<dbReference type="KEGG" id="sfv:SFV_2447"/>
<dbReference type="HOGENOM" id="CLU_053130_0_0_6"/>
<dbReference type="Proteomes" id="UP000000659">
    <property type="component" value="Chromosome"/>
</dbReference>
<dbReference type="GO" id="GO:0005886">
    <property type="term" value="C:plasma membrane"/>
    <property type="evidence" value="ECO:0007669"/>
    <property type="project" value="UniProtKB-SubCell"/>
</dbReference>
<dbReference type="GO" id="GO:0015108">
    <property type="term" value="F:chloride transmembrane transporter activity"/>
    <property type="evidence" value="ECO:0007669"/>
    <property type="project" value="InterPro"/>
</dbReference>
<dbReference type="GO" id="GO:0005216">
    <property type="term" value="F:monoatomic ion channel activity"/>
    <property type="evidence" value="ECO:0007669"/>
    <property type="project" value="UniProtKB-UniRule"/>
</dbReference>
<dbReference type="CDD" id="cd00400">
    <property type="entry name" value="Voltage_gated_ClC"/>
    <property type="match status" value="1"/>
</dbReference>
<dbReference type="FunFam" id="1.10.3080.10:FF:000007">
    <property type="entry name" value="Putative ion-transport protein YfeO"/>
    <property type="match status" value="1"/>
</dbReference>
<dbReference type="Gene3D" id="1.10.3080.10">
    <property type="entry name" value="Clc chloride channel"/>
    <property type="match status" value="1"/>
</dbReference>
<dbReference type="HAMAP" id="MF_01115">
    <property type="entry name" value="CLC_YfeO"/>
    <property type="match status" value="1"/>
</dbReference>
<dbReference type="InterPro" id="IPR022969">
    <property type="entry name" value="Chloride_channel_YfeO"/>
</dbReference>
<dbReference type="InterPro" id="IPR014743">
    <property type="entry name" value="Cl-channel_core"/>
</dbReference>
<dbReference type="InterPro" id="IPR001807">
    <property type="entry name" value="ClC"/>
</dbReference>
<dbReference type="InterPro" id="IPR050368">
    <property type="entry name" value="ClC-type_chloride_channel"/>
</dbReference>
<dbReference type="NCBIfam" id="NF002971">
    <property type="entry name" value="PRK03655.1"/>
    <property type="match status" value="1"/>
</dbReference>
<dbReference type="PANTHER" id="PTHR43427">
    <property type="entry name" value="CHLORIDE CHANNEL PROTEIN CLC-E"/>
    <property type="match status" value="1"/>
</dbReference>
<dbReference type="PANTHER" id="PTHR43427:SF9">
    <property type="entry name" value="ION-TRANSPORT PROTEIN YFEO-RELATED"/>
    <property type="match status" value="1"/>
</dbReference>
<dbReference type="Pfam" id="PF00654">
    <property type="entry name" value="Voltage_CLC"/>
    <property type="match status" value="1"/>
</dbReference>
<dbReference type="PRINTS" id="PR00762">
    <property type="entry name" value="CLCHANNEL"/>
</dbReference>
<dbReference type="SUPFAM" id="SSF81340">
    <property type="entry name" value="Clc chloride channel"/>
    <property type="match status" value="1"/>
</dbReference>
<accession>Q0T2B0</accession>
<protein>
    <recommendedName>
        <fullName evidence="1">Putative ion-transport protein YfeO</fullName>
    </recommendedName>
</protein>
<gene>
    <name evidence="1" type="primary">yfeO</name>
    <name type="ordered locus">SFV_2447</name>
</gene>
<comment type="subcellular location">
    <subcellularLocation>
        <location evidence="1">Cell membrane</location>
        <topology evidence="1">Multi-pass membrane protein</topology>
    </subcellularLocation>
</comment>
<comment type="similarity">
    <text evidence="1">Belongs to the chloride channel (TC 2.A.49) family.</text>
</comment>
<feature type="chain" id="PRO_0000298436" description="Putative ion-transport protein YfeO">
    <location>
        <begin position="1"/>
        <end position="418"/>
    </location>
</feature>
<feature type="transmembrane region" description="Helical" evidence="1">
    <location>
        <begin position="10"/>
        <end position="30"/>
    </location>
</feature>
<feature type="transmembrane region" description="Helical" evidence="1">
    <location>
        <begin position="54"/>
        <end position="74"/>
    </location>
</feature>
<feature type="transmembrane region" description="Helical" evidence="1">
    <location>
        <begin position="99"/>
        <end position="119"/>
    </location>
</feature>
<feature type="transmembrane region" description="Helical" evidence="1">
    <location>
        <begin position="120"/>
        <end position="140"/>
    </location>
</feature>
<feature type="transmembrane region" description="Helical" evidence="1">
    <location>
        <begin position="149"/>
        <end position="169"/>
    </location>
</feature>
<feature type="transmembrane region" description="Helical" evidence="1">
    <location>
        <begin position="186"/>
        <end position="206"/>
    </location>
</feature>
<feature type="transmembrane region" description="Helical" evidence="1">
    <location>
        <begin position="223"/>
        <end position="243"/>
    </location>
</feature>
<feature type="transmembrane region" description="Helical" evidence="1">
    <location>
        <begin position="258"/>
        <end position="278"/>
    </location>
</feature>
<feature type="transmembrane region" description="Helical" evidence="1">
    <location>
        <begin position="300"/>
        <end position="320"/>
    </location>
</feature>
<feature type="transmembrane region" description="Helical" evidence="1">
    <location>
        <begin position="322"/>
        <end position="342"/>
    </location>
</feature>
<feature type="transmembrane region" description="Helical" evidence="1">
    <location>
        <begin position="343"/>
        <end position="363"/>
    </location>
</feature>
<feature type="transmembrane region" description="Helical" evidence="1">
    <location>
        <begin position="371"/>
        <end position="391"/>
    </location>
</feature>
<reference key="1">
    <citation type="journal article" date="2006" name="BMC Genomics">
        <title>Complete genome sequence of Shigella flexneri 5b and comparison with Shigella flexneri 2a.</title>
        <authorList>
            <person name="Nie H."/>
            <person name="Yang F."/>
            <person name="Zhang X."/>
            <person name="Yang J."/>
            <person name="Chen L."/>
            <person name="Wang J."/>
            <person name="Xiong Z."/>
            <person name="Peng J."/>
            <person name="Sun L."/>
            <person name="Dong J."/>
            <person name="Xue Y."/>
            <person name="Xu X."/>
            <person name="Chen S."/>
            <person name="Yao Z."/>
            <person name="Shen Y."/>
            <person name="Jin Q."/>
        </authorList>
    </citation>
    <scope>NUCLEOTIDE SEQUENCE [LARGE SCALE GENOMIC DNA]</scope>
    <source>
        <strain>8401</strain>
    </source>
</reference>
<proteinExistence type="inferred from homology"/>
<name>YFEO_SHIF8</name>
<evidence type="ECO:0000255" key="1">
    <source>
        <dbReference type="HAMAP-Rule" id="MF_01115"/>
    </source>
</evidence>